<reference key="1">
    <citation type="book" date="1983" name="Peptide chemistry 1982">
        <editorList>
            <person name="Sakakibara S."/>
        </editorList>
        <authorList>
            <person name="Yasuhara T."/>
            <person name="Nakajima T."/>
            <person name="Erspaer V."/>
        </authorList>
    </citation>
    <scope>PROTEIN SEQUENCE</scope>
    <scope>FUNCTION</scope>
    <scope>AMIDATION AT LEU-13</scope>
    <scope>SUBCELLULAR LOCATION</scope>
    <source>
        <tissue>Venom</tissue>
    </source>
</reference>
<name>CRBL_VESTR</name>
<organism>
    <name type="scientific">Vespa tropica</name>
    <name type="common">Greater banded hornet</name>
    <name type="synonym">Sphex tropica</name>
    <dbReference type="NCBI Taxonomy" id="7450"/>
    <lineage>
        <taxon>Eukaryota</taxon>
        <taxon>Metazoa</taxon>
        <taxon>Ecdysozoa</taxon>
        <taxon>Arthropoda</taxon>
        <taxon>Hexapoda</taxon>
        <taxon>Insecta</taxon>
        <taxon>Pterygota</taxon>
        <taxon>Neoptera</taxon>
        <taxon>Endopterygota</taxon>
        <taxon>Hymenoptera</taxon>
        <taxon>Apocrita</taxon>
        <taxon>Aculeata</taxon>
        <taxon>Vespoidea</taxon>
        <taxon>Vespidae</taxon>
        <taxon>Vespinae</taxon>
        <taxon>Vespa</taxon>
    </lineage>
</organism>
<feature type="peptide" id="PRO_0000044049" description="Vespid chemotactic peptide T" evidence="3">
    <location>
        <begin position="1"/>
        <end position="13"/>
    </location>
</feature>
<feature type="modified residue" description="Leucine amide" evidence="3">
    <location>
        <position position="13"/>
    </location>
</feature>
<proteinExistence type="evidence at protein level"/>
<sequence>FLPILGKILGGLL</sequence>
<dbReference type="GO" id="GO:0005576">
    <property type="term" value="C:extracellular region"/>
    <property type="evidence" value="ECO:0007669"/>
    <property type="project" value="UniProtKB-SubCell"/>
</dbReference>
<dbReference type="GO" id="GO:0090729">
    <property type="term" value="F:toxin activity"/>
    <property type="evidence" value="ECO:0007669"/>
    <property type="project" value="UniProtKB-KW"/>
</dbReference>
<dbReference type="GO" id="GO:0006935">
    <property type="term" value="P:chemotaxis"/>
    <property type="evidence" value="ECO:0007669"/>
    <property type="project" value="UniProtKB-KW"/>
</dbReference>
<accession>P17231</accession>
<protein>
    <recommendedName>
        <fullName evidence="4">Vespid chemotactic peptide T</fullName>
        <shortName evidence="4">VESCP-T</shortName>
        <shortName evidence="5">Ves-CP-T</shortName>
    </recommendedName>
</protein>
<comment type="function">
    <text evidence="1 2 3">Mast cell degranulating peptide. Induces the chemotaxis of neutrophils (Ref.1). Its mast cell degranulation activity may be related to the activation of G-protein coupled receptors in mast cells as well as interaction with other proteins located in cell endosomal membranes in the mast cells (By similarity).</text>
</comment>
<comment type="subcellular location">
    <subcellularLocation>
        <location evidence="3">Secreted</location>
    </subcellularLocation>
</comment>
<comment type="tissue specificity">
    <text evidence="6">Expressed by the venom gland.</text>
</comment>
<comment type="similarity">
    <text evidence="5">Belongs to the MCD family. Crabrolin subfamily.</text>
</comment>
<keyword id="KW-0027">Amidation</keyword>
<keyword id="KW-0145">Chemotaxis</keyword>
<keyword id="KW-0903">Direct protein sequencing</keyword>
<keyword id="KW-1213">G-protein coupled receptor impairing toxin</keyword>
<keyword id="KW-0467">Mast cell degranulation</keyword>
<keyword id="KW-0964">Secreted</keyword>
<keyword id="KW-0800">Toxin</keyword>
<evidence type="ECO:0000250" key="1">
    <source>
        <dbReference type="UniProtKB" id="P01514"/>
    </source>
</evidence>
<evidence type="ECO:0000250" key="2">
    <source>
        <dbReference type="UniProtKB" id="P84914"/>
    </source>
</evidence>
<evidence type="ECO:0000269" key="3">
    <source ref="1"/>
</evidence>
<evidence type="ECO:0000303" key="4">
    <source ref="1"/>
</evidence>
<evidence type="ECO:0000305" key="5"/>
<evidence type="ECO:0000305" key="6">
    <source ref="1"/>
</evidence>